<comment type="function">
    <text evidence="5 6">Catalyzes the formation of 6,7-dimethyl-8-ribityllumazine by condensation of 5-amino-6-(D-ribitylamino)uracil with 3,4-dihydroxy-2-butanone 4-phosphate. This is the penultimate step in the biosynthesis of riboflavin.</text>
</comment>
<comment type="catalytic activity">
    <reaction evidence="6">
        <text>(2S)-2-hydroxy-3-oxobutyl phosphate + 5-amino-6-(D-ribitylamino)uracil = 6,7-dimethyl-8-(1-D-ribityl)lumazine + phosphate + 2 H2O + H(+)</text>
        <dbReference type="Rhea" id="RHEA:26152"/>
        <dbReference type="ChEBI" id="CHEBI:15377"/>
        <dbReference type="ChEBI" id="CHEBI:15378"/>
        <dbReference type="ChEBI" id="CHEBI:15934"/>
        <dbReference type="ChEBI" id="CHEBI:43474"/>
        <dbReference type="ChEBI" id="CHEBI:58201"/>
        <dbReference type="ChEBI" id="CHEBI:58830"/>
        <dbReference type="EC" id="2.5.1.78"/>
    </reaction>
</comment>
<comment type="biophysicochemical properties">
    <kinetics>
        <KM evidence="6">4 uM for 5-amino-6-(D-ribitylamino)uracil</KM>
        <KM evidence="6">90 uM for 3,4-dihydroxy-2-butanone 4-phosphate</KM>
        <Vmax evidence="6">15400.0 nmol/h/mg enzyme</Vmax>
    </kinetics>
</comment>
<comment type="pathway">
    <text evidence="5 6">Cofactor biosynthesis; riboflavin biosynthesis; riboflavin from 2-hydroxy-3-oxobutyl phosphate and 5-amino-6-(D-ribitylamino)uracil: step 1/2.</text>
</comment>
<comment type="subunit">
    <text evidence="2 5 6">Homopentamer.</text>
</comment>
<comment type="subcellular location">
    <subcellularLocation>
        <location evidence="4">Mitochondrion intermembrane space</location>
    </subcellularLocation>
</comment>
<comment type="induction">
    <text evidence="5">Is constitutively expressed at moderate levels.</text>
</comment>
<comment type="miscellaneous">
    <text evidence="3">Present with 3260 molecules/cell in log phase SD medium.</text>
</comment>
<comment type="similarity">
    <text evidence="7">Belongs to the DMRL synthase family.</text>
</comment>
<accession>P50861</accession>
<accession>D6W1S6</accession>
<accession>Q08286</accession>
<feature type="chain" id="PRO_0000134857" description="6,7-dimethyl-8-ribityllumazine synthase">
    <location>
        <begin position="1"/>
        <end position="169"/>
    </location>
</feature>
<feature type="active site" description="Proton donor" evidence="1">
    <location>
        <position position="98"/>
    </location>
</feature>
<feature type="binding site">
    <location>
        <position position="27"/>
    </location>
    <ligand>
        <name>5-amino-6-(D-ribitylamino)uracil</name>
        <dbReference type="ChEBI" id="CHEBI:15934"/>
    </ligand>
</feature>
<feature type="binding site">
    <location>
        <begin position="61"/>
        <end position="63"/>
    </location>
    <ligand>
        <name>5-amino-6-(D-ribitylamino)uracil</name>
        <dbReference type="ChEBI" id="CHEBI:15934"/>
    </ligand>
</feature>
<feature type="binding site">
    <location>
        <begin position="90"/>
        <end position="92"/>
    </location>
    <ligand>
        <name>5-amino-6-(D-ribitylamino)uracil</name>
        <dbReference type="ChEBI" id="CHEBI:15934"/>
    </ligand>
</feature>
<feature type="binding site">
    <location>
        <begin position="95"/>
        <end position="96"/>
    </location>
    <ligand>
        <name>(2S)-2-hydroxy-3-oxobutyl phosphate</name>
        <dbReference type="ChEBI" id="CHEBI:58830"/>
    </ligand>
</feature>
<feature type="binding site">
    <location>
        <position position="123"/>
    </location>
    <ligand>
        <name>5-amino-6-(D-ribitylamino)uracil</name>
        <dbReference type="ChEBI" id="CHEBI:15934"/>
    </ligand>
</feature>
<feature type="binding site">
    <location>
        <position position="137"/>
    </location>
    <ligand>
        <name>(2S)-2-hydroxy-3-oxobutyl phosphate</name>
        <dbReference type="ChEBI" id="CHEBI:58830"/>
    </ligand>
</feature>
<feature type="sequence conflict" description="In Ref. 1; CAA79744." evidence="7" ref="1">
    <original>A</original>
    <variation>V</variation>
    <location>
        <position position="44"/>
    </location>
</feature>
<feature type="sequence conflict" description="In Ref. 1; CAA79744." evidence="7" ref="1">
    <original>N</original>
    <variation>K</variation>
    <location>
        <position position="51"/>
    </location>
</feature>
<feature type="strand" evidence="8">
    <location>
        <begin position="20"/>
        <end position="24"/>
    </location>
</feature>
<feature type="helix" evidence="8">
    <location>
        <begin position="29"/>
        <end position="45"/>
    </location>
</feature>
<feature type="helix" evidence="8">
    <location>
        <begin position="50"/>
        <end position="52"/>
    </location>
</feature>
<feature type="strand" evidence="8">
    <location>
        <begin position="53"/>
        <end position="57"/>
    </location>
</feature>
<feature type="helix" evidence="8">
    <location>
        <begin position="61"/>
        <end position="63"/>
    </location>
</feature>
<feature type="helix" evidence="8">
    <location>
        <begin position="64"/>
        <end position="77"/>
    </location>
</feature>
<feature type="strand" evidence="8">
    <location>
        <begin position="83"/>
        <end position="92"/>
    </location>
</feature>
<feature type="strand" evidence="8">
    <location>
        <begin position="95"/>
        <end position="97"/>
    </location>
</feature>
<feature type="helix" evidence="8">
    <location>
        <begin position="98"/>
        <end position="117"/>
    </location>
</feature>
<feature type="strand" evidence="8">
    <location>
        <begin position="124"/>
        <end position="130"/>
    </location>
</feature>
<feature type="helix" evidence="8">
    <location>
        <begin position="131"/>
        <end position="137"/>
    </location>
</feature>
<feature type="helix" evidence="8">
    <location>
        <begin position="149"/>
        <end position="164"/>
    </location>
</feature>
<sequence>MAVKGLGKPDQVYDGSKIRVGIIHARWNRVIIDALVKGAIERMASLGVEENNIIIETVPGSYELPWGTKRFVDRQAKLGKPLDVVIPIGVLIKGSTMHFEYISDSTTHALMNLQEKVDMPVIFGLLTCMTEEQALARAGIDEAHSMHNHGEDWGAAAVEMAVKFGKNAF</sequence>
<reference key="1">
    <citation type="journal article" date="1995" name="J. Biol. Chem.">
        <title>The Saccharomyces cerevisiae RIB4 gene codes for 6,7-dimethyl-8-ribityllumazine synthase involved in riboflavin biosynthesis. Molecular characterization of the gene and purification of the encoded protein.</title>
        <authorList>
            <person name="Garcia-Ramirez J.J."/>
            <person name="Santos M.A."/>
            <person name="Revuelta J.L."/>
        </authorList>
    </citation>
    <scope>NUCLEOTIDE SEQUENCE [GENOMIC DNA]</scope>
    <scope>IDENTIFICATION</scope>
    <scope>FUNCTION</scope>
    <scope>ROLE IN RIBOFLAVIN BIOSYNTHESIS</scope>
    <scope>SUBUNIT</scope>
    <scope>INDUCTION</scope>
    <scope>PATHWAY</scope>
</reference>
<reference key="2">
    <citation type="journal article" date="1997" name="Nature">
        <title>The nucleotide sequence of Saccharomyces cerevisiae chromosome XV.</title>
        <authorList>
            <person name="Dujon B."/>
            <person name="Albermann K."/>
            <person name="Aldea M."/>
            <person name="Alexandraki D."/>
            <person name="Ansorge W."/>
            <person name="Arino J."/>
            <person name="Benes V."/>
            <person name="Bohn C."/>
            <person name="Bolotin-Fukuhara M."/>
            <person name="Bordonne R."/>
            <person name="Boyer J."/>
            <person name="Camasses A."/>
            <person name="Casamayor A."/>
            <person name="Casas C."/>
            <person name="Cheret G."/>
            <person name="Cziepluch C."/>
            <person name="Daignan-Fornier B."/>
            <person name="Dang V.-D."/>
            <person name="de Haan M."/>
            <person name="Delius H."/>
            <person name="Durand P."/>
            <person name="Fairhead C."/>
            <person name="Feldmann H."/>
            <person name="Gaillon L."/>
            <person name="Galisson F."/>
            <person name="Gamo F.-J."/>
            <person name="Gancedo C."/>
            <person name="Goffeau A."/>
            <person name="Goulding S.E."/>
            <person name="Grivell L.A."/>
            <person name="Habbig B."/>
            <person name="Hand N.J."/>
            <person name="Hani J."/>
            <person name="Hattenhorst U."/>
            <person name="Hebling U."/>
            <person name="Hernando Y."/>
            <person name="Herrero E."/>
            <person name="Heumann K."/>
            <person name="Hiesel R."/>
            <person name="Hilger F."/>
            <person name="Hofmann B."/>
            <person name="Hollenberg C.P."/>
            <person name="Hughes B."/>
            <person name="Jauniaux J.-C."/>
            <person name="Kalogeropoulos A."/>
            <person name="Katsoulou C."/>
            <person name="Kordes E."/>
            <person name="Lafuente M.J."/>
            <person name="Landt O."/>
            <person name="Louis E.J."/>
            <person name="Maarse A.C."/>
            <person name="Madania A."/>
            <person name="Mannhaupt G."/>
            <person name="Marck C."/>
            <person name="Martin R.P."/>
            <person name="Mewes H.-W."/>
            <person name="Michaux G."/>
            <person name="Paces V."/>
            <person name="Parle-McDermott A.G."/>
            <person name="Pearson B.M."/>
            <person name="Perrin A."/>
            <person name="Pettersson B."/>
            <person name="Poch O."/>
            <person name="Pohl T.M."/>
            <person name="Poirey R."/>
            <person name="Portetelle D."/>
            <person name="Pujol A."/>
            <person name="Purnelle B."/>
            <person name="Ramezani Rad M."/>
            <person name="Rechmann S."/>
            <person name="Schwager C."/>
            <person name="Schweizer M."/>
            <person name="Sor F."/>
            <person name="Sterky F."/>
            <person name="Tarassov I.A."/>
            <person name="Teodoru C."/>
            <person name="Tettelin H."/>
            <person name="Thierry A."/>
            <person name="Tobiasch E."/>
            <person name="Tzermia M."/>
            <person name="Uhlen M."/>
            <person name="Unseld M."/>
            <person name="Valens M."/>
            <person name="Vandenbol M."/>
            <person name="Vetter I."/>
            <person name="Vlcek C."/>
            <person name="Voet M."/>
            <person name="Volckaert G."/>
            <person name="Voss H."/>
            <person name="Wambutt R."/>
            <person name="Wedler H."/>
            <person name="Wiemann S."/>
            <person name="Winsor B."/>
            <person name="Wolfe K.H."/>
            <person name="Zollner A."/>
            <person name="Zumstein E."/>
            <person name="Kleine K."/>
        </authorList>
    </citation>
    <scope>NUCLEOTIDE SEQUENCE [LARGE SCALE GENOMIC DNA]</scope>
    <source>
        <strain>ATCC 204508 / S288c</strain>
    </source>
</reference>
<reference key="3">
    <citation type="journal article" date="2014" name="G3 (Bethesda)">
        <title>The reference genome sequence of Saccharomyces cerevisiae: Then and now.</title>
        <authorList>
            <person name="Engel S.R."/>
            <person name="Dietrich F.S."/>
            <person name="Fisk D.G."/>
            <person name="Binkley G."/>
            <person name="Balakrishnan R."/>
            <person name="Costanzo M.C."/>
            <person name="Dwight S.S."/>
            <person name="Hitz B.C."/>
            <person name="Karra K."/>
            <person name="Nash R.S."/>
            <person name="Weng S."/>
            <person name="Wong E.D."/>
            <person name="Lloyd P."/>
            <person name="Skrzypek M.S."/>
            <person name="Miyasato S.R."/>
            <person name="Simison M."/>
            <person name="Cherry J.M."/>
        </authorList>
    </citation>
    <scope>GENOME REANNOTATION</scope>
    <source>
        <strain>ATCC 204508 / S288c</strain>
    </source>
</reference>
<reference key="4">
    <citation type="journal article" date="2007" name="Genome Res.">
        <title>Approaching a complete repository of sequence-verified protein-encoding clones for Saccharomyces cerevisiae.</title>
        <authorList>
            <person name="Hu Y."/>
            <person name="Rolfs A."/>
            <person name="Bhullar B."/>
            <person name="Murthy T.V.S."/>
            <person name="Zhu C."/>
            <person name="Berger M.F."/>
            <person name="Camargo A.A."/>
            <person name="Kelley F."/>
            <person name="McCarron S."/>
            <person name="Jepson D."/>
            <person name="Richardson A."/>
            <person name="Raphael J."/>
            <person name="Moreira D."/>
            <person name="Taycher E."/>
            <person name="Zuo D."/>
            <person name="Mohr S."/>
            <person name="Kane M.F."/>
            <person name="Williamson J."/>
            <person name="Simpson A.J.G."/>
            <person name="Bulyk M.L."/>
            <person name="Harlow E."/>
            <person name="Marsischky G."/>
            <person name="Kolodner R.D."/>
            <person name="LaBaer J."/>
        </authorList>
    </citation>
    <scope>NUCLEOTIDE SEQUENCE [GENOMIC DNA]</scope>
    <source>
        <strain>ATCC 204508 / S288c</strain>
    </source>
</reference>
<reference key="5">
    <citation type="journal article" date="1996" name="J. Biol. Chem.">
        <title>Biosynthesis of riboflavin. Lumazine synthase of Escherichia coli.</title>
        <authorList>
            <person name="Moertl S."/>
            <person name="Fischer M."/>
            <person name="Richter G."/>
            <person name="Tack J."/>
            <person name="Weinkauf S."/>
            <person name="Bacher A."/>
        </authorList>
    </citation>
    <scope>FUNCTION</scope>
    <scope>CATALYTIC ACTIVITY</scope>
    <scope>KINETIC PARAMETERS</scope>
    <scope>SUBUNIT</scope>
    <scope>PATHWAY</scope>
</reference>
<reference key="6">
    <citation type="journal article" date="2003" name="Nature">
        <title>Global analysis of protein expression in yeast.</title>
        <authorList>
            <person name="Ghaemmaghami S."/>
            <person name="Huh W.-K."/>
            <person name="Bower K."/>
            <person name="Howson R.W."/>
            <person name="Belle A."/>
            <person name="Dephoure N."/>
            <person name="O'Shea E.K."/>
            <person name="Weissman J.S."/>
        </authorList>
    </citation>
    <scope>LEVEL OF PROTEIN EXPRESSION [LARGE SCALE ANALYSIS]</scope>
</reference>
<reference key="7">
    <citation type="journal article" date="2012" name="Mol. Cell. Proteomics">
        <title>Intermembrane space proteome of yeast mitochondria.</title>
        <authorList>
            <person name="Voegtle F.N."/>
            <person name="Burkhart J.M."/>
            <person name="Rao S."/>
            <person name="Gerbeth C."/>
            <person name="Hinrichs J."/>
            <person name="Martinou J.C."/>
            <person name="Chacinska A."/>
            <person name="Sickmann A."/>
            <person name="Zahedi R.P."/>
            <person name="Meisinger C."/>
        </authorList>
    </citation>
    <scope>IDENTIFICATION BY MASS SPECTROMETRY</scope>
    <scope>SUBCELLULAR LOCATION [LARGE SCALE ANALYSIS]</scope>
</reference>
<reference key="8">
    <citation type="journal article" date="2012" name="Proc. Natl. Acad. Sci. U.S.A.">
        <title>N-terminal acetylome analyses and functional insights of the N-terminal acetyltransferase NatB.</title>
        <authorList>
            <person name="Van Damme P."/>
            <person name="Lasa M."/>
            <person name="Polevoda B."/>
            <person name="Gazquez C."/>
            <person name="Elosegui-Artola A."/>
            <person name="Kim D.S."/>
            <person name="De Juan-Pardo E."/>
            <person name="Demeyer K."/>
            <person name="Hole K."/>
            <person name="Larrea E."/>
            <person name="Timmerman E."/>
            <person name="Prieto J."/>
            <person name="Arnesen T."/>
            <person name="Sherman F."/>
            <person name="Gevaert K."/>
            <person name="Aldabe R."/>
        </authorList>
    </citation>
    <scope>IDENTIFICATION BY MASS SPECTROMETRY [LARGE SCALE ANALYSIS]</scope>
</reference>
<reference key="9">
    <citation type="journal article" date="2000" name="J. Mol. Biol.">
        <title>The atomic structure of pentameric lumazine synthase from Saccharomyces cerevisiae at 1.85 A resolution reveals the binding mode of a phosphonate intermediate analogue.</title>
        <authorList>
            <person name="Meining W."/>
            <person name="Moertl S."/>
            <person name="Fischer M."/>
            <person name="Cushman M."/>
            <person name="Bacher A."/>
            <person name="Ladenstein R."/>
        </authorList>
    </citation>
    <scope>X-RAY CRYSTALLOGRAPHY (1.85 ANGSTROMS) IN COMPLEX WITH A REACTION INTERMEDIATE ANALOG</scope>
    <scope>SUBUNIT</scope>
    <scope>REACTION MECHANISM</scope>
</reference>
<keyword id="KW-0002">3D-structure</keyword>
<keyword id="KW-0496">Mitochondrion</keyword>
<keyword id="KW-1185">Reference proteome</keyword>
<keyword id="KW-0686">Riboflavin biosynthesis</keyword>
<keyword id="KW-0808">Transferase</keyword>
<dbReference type="EC" id="2.5.1.78"/>
<dbReference type="EMBL" id="Z21620">
    <property type="protein sequence ID" value="CAA79744.1"/>
    <property type="molecule type" value="Genomic_DNA"/>
</dbReference>
<dbReference type="EMBL" id="Z74885">
    <property type="protein sequence ID" value="CAA99164.1"/>
    <property type="molecule type" value="Genomic_DNA"/>
</dbReference>
<dbReference type="EMBL" id="AY558430">
    <property type="protein sequence ID" value="AAS56756.1"/>
    <property type="molecule type" value="Genomic_DNA"/>
</dbReference>
<dbReference type="EMBL" id="BK006948">
    <property type="protein sequence ID" value="DAA10642.1"/>
    <property type="molecule type" value="Genomic_DNA"/>
</dbReference>
<dbReference type="PIR" id="S61871">
    <property type="entry name" value="S61871"/>
</dbReference>
<dbReference type="RefSeq" id="NP_014498.1">
    <property type="nucleotide sequence ID" value="NM_001183397.1"/>
</dbReference>
<dbReference type="PDB" id="1EJB">
    <property type="method" value="X-ray"/>
    <property type="resolution" value="1.85 A"/>
    <property type="chains" value="A/B/C/D/E=2-169"/>
</dbReference>
<dbReference type="PDBsum" id="1EJB"/>
<dbReference type="SMR" id="P50861"/>
<dbReference type="BioGRID" id="34274">
    <property type="interactions" value="37"/>
</dbReference>
<dbReference type="DIP" id="DIP-1931N"/>
<dbReference type="FunCoup" id="P50861">
    <property type="interactions" value="418"/>
</dbReference>
<dbReference type="IntAct" id="P50861">
    <property type="interactions" value="9"/>
</dbReference>
<dbReference type="MINT" id="P50861"/>
<dbReference type="STRING" id="4932.YOL143C"/>
<dbReference type="iPTMnet" id="P50861"/>
<dbReference type="PaxDb" id="4932-YOL143C"/>
<dbReference type="PeptideAtlas" id="P50861"/>
<dbReference type="TopDownProteomics" id="P50861"/>
<dbReference type="EnsemblFungi" id="YOL143C_mRNA">
    <property type="protein sequence ID" value="YOL143C"/>
    <property type="gene ID" value="YOL143C"/>
</dbReference>
<dbReference type="GeneID" id="854022"/>
<dbReference type="KEGG" id="sce:YOL143C"/>
<dbReference type="AGR" id="SGD:S000005503"/>
<dbReference type="SGD" id="S000005503">
    <property type="gene designation" value="RIB4"/>
</dbReference>
<dbReference type="VEuPathDB" id="FungiDB:YOL143C"/>
<dbReference type="eggNOG" id="KOG3243">
    <property type="taxonomic scope" value="Eukaryota"/>
</dbReference>
<dbReference type="HOGENOM" id="CLU_089358_2_2_1"/>
<dbReference type="InParanoid" id="P50861"/>
<dbReference type="OMA" id="CQGVTQG"/>
<dbReference type="OrthoDB" id="2965at2759"/>
<dbReference type="BioCyc" id="MetaCyc:YOL143C-MONOMER"/>
<dbReference type="BioCyc" id="YEAST:YOL143C-MONOMER"/>
<dbReference type="BRENDA" id="2.5.1.78">
    <property type="organism ID" value="984"/>
</dbReference>
<dbReference type="SABIO-RK" id="P50861"/>
<dbReference type="UniPathway" id="UPA00275">
    <property type="reaction ID" value="UER00404"/>
</dbReference>
<dbReference type="BioGRID-ORCS" id="854022">
    <property type="hits" value="1 hit in 10 CRISPR screens"/>
</dbReference>
<dbReference type="EvolutionaryTrace" id="P50861"/>
<dbReference type="PRO" id="PR:P50861"/>
<dbReference type="Proteomes" id="UP000002311">
    <property type="component" value="Chromosome XV"/>
</dbReference>
<dbReference type="RNAct" id="P50861">
    <property type="molecule type" value="protein"/>
</dbReference>
<dbReference type="GO" id="GO:0005737">
    <property type="term" value="C:cytoplasm"/>
    <property type="evidence" value="ECO:0007005"/>
    <property type="project" value="SGD"/>
</dbReference>
<dbReference type="GO" id="GO:0005758">
    <property type="term" value="C:mitochondrial intermembrane space"/>
    <property type="evidence" value="ECO:0000314"/>
    <property type="project" value="SGD"/>
</dbReference>
<dbReference type="GO" id="GO:0005634">
    <property type="term" value="C:nucleus"/>
    <property type="evidence" value="ECO:0007005"/>
    <property type="project" value="SGD"/>
</dbReference>
<dbReference type="GO" id="GO:0009349">
    <property type="term" value="C:riboflavin synthase complex"/>
    <property type="evidence" value="ECO:0007669"/>
    <property type="project" value="InterPro"/>
</dbReference>
<dbReference type="GO" id="GO:0000906">
    <property type="term" value="F:6,7-dimethyl-8-ribityllumazine synthase activity"/>
    <property type="evidence" value="ECO:0000314"/>
    <property type="project" value="SGD"/>
</dbReference>
<dbReference type="GO" id="GO:0009231">
    <property type="term" value="P:riboflavin biosynthetic process"/>
    <property type="evidence" value="ECO:0000315"/>
    <property type="project" value="SGD"/>
</dbReference>
<dbReference type="CDD" id="cd09209">
    <property type="entry name" value="Lumazine_synthase-I"/>
    <property type="match status" value="1"/>
</dbReference>
<dbReference type="FunFam" id="3.40.50.960:FF:000007">
    <property type="entry name" value="6,7-dimethyl-8-ribityllumazine synthase"/>
    <property type="match status" value="1"/>
</dbReference>
<dbReference type="Gene3D" id="3.40.50.960">
    <property type="entry name" value="Lumazine/riboflavin synthase"/>
    <property type="match status" value="1"/>
</dbReference>
<dbReference type="HAMAP" id="MF_00178">
    <property type="entry name" value="Lumazine_synth"/>
    <property type="match status" value="1"/>
</dbReference>
<dbReference type="InterPro" id="IPR034964">
    <property type="entry name" value="LS"/>
</dbReference>
<dbReference type="InterPro" id="IPR002180">
    <property type="entry name" value="LS/RS"/>
</dbReference>
<dbReference type="InterPro" id="IPR036467">
    <property type="entry name" value="LS/RS_sf"/>
</dbReference>
<dbReference type="NCBIfam" id="TIGR00114">
    <property type="entry name" value="lumazine-synth"/>
    <property type="match status" value="1"/>
</dbReference>
<dbReference type="PANTHER" id="PTHR21058:SF0">
    <property type="entry name" value="6,7-DIMETHYL-8-RIBITYLLUMAZINE SYNTHASE"/>
    <property type="match status" value="1"/>
</dbReference>
<dbReference type="PANTHER" id="PTHR21058">
    <property type="entry name" value="6,7-DIMETHYL-8-RIBITYLLUMAZINE SYNTHASE DMRL SYNTHASE LUMAZINE SYNTHASE"/>
    <property type="match status" value="1"/>
</dbReference>
<dbReference type="Pfam" id="PF00885">
    <property type="entry name" value="DMRL_synthase"/>
    <property type="match status" value="1"/>
</dbReference>
<dbReference type="SUPFAM" id="SSF52121">
    <property type="entry name" value="Lumazine synthase"/>
    <property type="match status" value="1"/>
</dbReference>
<organism>
    <name type="scientific">Saccharomyces cerevisiae (strain ATCC 204508 / S288c)</name>
    <name type="common">Baker's yeast</name>
    <dbReference type="NCBI Taxonomy" id="559292"/>
    <lineage>
        <taxon>Eukaryota</taxon>
        <taxon>Fungi</taxon>
        <taxon>Dikarya</taxon>
        <taxon>Ascomycota</taxon>
        <taxon>Saccharomycotina</taxon>
        <taxon>Saccharomycetes</taxon>
        <taxon>Saccharomycetales</taxon>
        <taxon>Saccharomycetaceae</taxon>
        <taxon>Saccharomyces</taxon>
    </lineage>
</organism>
<evidence type="ECO:0000255" key="1"/>
<evidence type="ECO:0000269" key="2">
    <source>
    </source>
</evidence>
<evidence type="ECO:0000269" key="3">
    <source>
    </source>
</evidence>
<evidence type="ECO:0000269" key="4">
    <source>
    </source>
</evidence>
<evidence type="ECO:0000269" key="5">
    <source>
    </source>
</evidence>
<evidence type="ECO:0000269" key="6">
    <source>
    </source>
</evidence>
<evidence type="ECO:0000305" key="7"/>
<evidence type="ECO:0007829" key="8">
    <source>
        <dbReference type="PDB" id="1EJB"/>
    </source>
</evidence>
<protein>
    <recommendedName>
        <fullName>6,7-dimethyl-8-ribityllumazine synthase</fullName>
        <shortName>DMRL synthase</shortName>
        <shortName>LS</shortName>
        <shortName>Lumazine synthase</shortName>
        <ecNumber>2.5.1.78</ecNumber>
    </recommendedName>
</protein>
<proteinExistence type="evidence at protein level"/>
<gene>
    <name type="primary">RIB4</name>
    <name type="ordered locus">YOL143C</name>
</gene>
<name>RIB4_YEAST</name>